<evidence type="ECO:0000255" key="1">
    <source>
        <dbReference type="HAMAP-Rule" id="MF_00087"/>
    </source>
</evidence>
<evidence type="ECO:0000256" key="2">
    <source>
        <dbReference type="SAM" id="MobiDB-lite"/>
    </source>
</evidence>
<organism>
    <name type="scientific">Xanthomonas oryzae pv. oryzae (strain PXO99A)</name>
    <dbReference type="NCBI Taxonomy" id="360094"/>
    <lineage>
        <taxon>Bacteria</taxon>
        <taxon>Pseudomonadati</taxon>
        <taxon>Pseudomonadota</taxon>
        <taxon>Gammaproteobacteria</taxon>
        <taxon>Lysobacterales</taxon>
        <taxon>Lysobacteraceae</taxon>
        <taxon>Xanthomonas</taxon>
    </lineage>
</organism>
<feature type="chain" id="PRO_1000093178" description="Glutamyl-tRNA reductase">
    <location>
        <begin position="1"/>
        <end position="432"/>
    </location>
</feature>
<feature type="region of interest" description="Disordered" evidence="2">
    <location>
        <begin position="407"/>
        <end position="432"/>
    </location>
</feature>
<feature type="active site" description="Nucleophile" evidence="1">
    <location>
        <position position="50"/>
    </location>
</feature>
<feature type="binding site" evidence="1">
    <location>
        <begin position="49"/>
        <end position="52"/>
    </location>
    <ligand>
        <name>substrate</name>
    </ligand>
</feature>
<feature type="binding site" evidence="1">
    <location>
        <position position="101"/>
    </location>
    <ligand>
        <name>substrate</name>
    </ligand>
</feature>
<feature type="binding site" evidence="1">
    <location>
        <begin position="106"/>
        <end position="108"/>
    </location>
    <ligand>
        <name>substrate</name>
    </ligand>
</feature>
<feature type="binding site" evidence="1">
    <location>
        <position position="112"/>
    </location>
    <ligand>
        <name>substrate</name>
    </ligand>
</feature>
<feature type="binding site" evidence="1">
    <location>
        <begin position="181"/>
        <end position="186"/>
    </location>
    <ligand>
        <name>NADP(+)</name>
        <dbReference type="ChEBI" id="CHEBI:58349"/>
    </ligand>
</feature>
<feature type="site" description="Important for activity" evidence="1">
    <location>
        <position position="91"/>
    </location>
</feature>
<keyword id="KW-0521">NADP</keyword>
<keyword id="KW-0560">Oxidoreductase</keyword>
<keyword id="KW-0627">Porphyrin biosynthesis</keyword>
<dbReference type="EC" id="1.2.1.70" evidence="1"/>
<dbReference type="EMBL" id="CP000967">
    <property type="protein sequence ID" value="ACD57863.1"/>
    <property type="molecule type" value="Genomic_DNA"/>
</dbReference>
<dbReference type="RefSeq" id="WP_011260048.1">
    <property type="nucleotide sequence ID" value="NC_010717.2"/>
</dbReference>
<dbReference type="SMR" id="B2SQN6"/>
<dbReference type="KEGG" id="xop:PXO_04547"/>
<dbReference type="eggNOG" id="COG0373">
    <property type="taxonomic scope" value="Bacteria"/>
</dbReference>
<dbReference type="HOGENOM" id="CLU_035113_2_2_6"/>
<dbReference type="UniPathway" id="UPA00251">
    <property type="reaction ID" value="UER00316"/>
</dbReference>
<dbReference type="Proteomes" id="UP000001740">
    <property type="component" value="Chromosome"/>
</dbReference>
<dbReference type="GO" id="GO:0008883">
    <property type="term" value="F:glutamyl-tRNA reductase activity"/>
    <property type="evidence" value="ECO:0007669"/>
    <property type="project" value="UniProtKB-UniRule"/>
</dbReference>
<dbReference type="GO" id="GO:0050661">
    <property type="term" value="F:NADP binding"/>
    <property type="evidence" value="ECO:0007669"/>
    <property type="project" value="InterPro"/>
</dbReference>
<dbReference type="GO" id="GO:0019353">
    <property type="term" value="P:protoporphyrinogen IX biosynthetic process from glutamate"/>
    <property type="evidence" value="ECO:0007669"/>
    <property type="project" value="TreeGrafter"/>
</dbReference>
<dbReference type="CDD" id="cd05213">
    <property type="entry name" value="NAD_bind_Glutamyl_tRNA_reduct"/>
    <property type="match status" value="1"/>
</dbReference>
<dbReference type="FunFam" id="3.30.460.30:FF:000001">
    <property type="entry name" value="Glutamyl-tRNA reductase"/>
    <property type="match status" value="1"/>
</dbReference>
<dbReference type="FunFam" id="3.40.50.720:FF:000031">
    <property type="entry name" value="Glutamyl-tRNA reductase"/>
    <property type="match status" value="1"/>
</dbReference>
<dbReference type="Gene3D" id="3.30.460.30">
    <property type="entry name" value="Glutamyl-tRNA reductase, N-terminal domain"/>
    <property type="match status" value="1"/>
</dbReference>
<dbReference type="Gene3D" id="3.40.50.720">
    <property type="entry name" value="NAD(P)-binding Rossmann-like Domain"/>
    <property type="match status" value="1"/>
</dbReference>
<dbReference type="HAMAP" id="MF_00087">
    <property type="entry name" value="Glu_tRNA_reductase"/>
    <property type="match status" value="1"/>
</dbReference>
<dbReference type="InterPro" id="IPR000343">
    <property type="entry name" value="4pyrrol_synth_GluRdtase"/>
</dbReference>
<dbReference type="InterPro" id="IPR015896">
    <property type="entry name" value="4pyrrol_synth_GluRdtase_dimer"/>
</dbReference>
<dbReference type="InterPro" id="IPR015895">
    <property type="entry name" value="4pyrrol_synth_GluRdtase_N"/>
</dbReference>
<dbReference type="InterPro" id="IPR018214">
    <property type="entry name" value="GluRdtase_CS"/>
</dbReference>
<dbReference type="InterPro" id="IPR036453">
    <property type="entry name" value="GluRdtase_dimer_dom_sf"/>
</dbReference>
<dbReference type="InterPro" id="IPR036343">
    <property type="entry name" value="GluRdtase_N_sf"/>
</dbReference>
<dbReference type="InterPro" id="IPR036291">
    <property type="entry name" value="NAD(P)-bd_dom_sf"/>
</dbReference>
<dbReference type="InterPro" id="IPR006151">
    <property type="entry name" value="Shikm_DH/Glu-tRNA_Rdtase"/>
</dbReference>
<dbReference type="NCBIfam" id="TIGR01035">
    <property type="entry name" value="hemA"/>
    <property type="match status" value="1"/>
</dbReference>
<dbReference type="PANTHER" id="PTHR43013">
    <property type="entry name" value="GLUTAMYL-TRNA REDUCTASE"/>
    <property type="match status" value="1"/>
</dbReference>
<dbReference type="PANTHER" id="PTHR43013:SF1">
    <property type="entry name" value="GLUTAMYL-TRNA REDUCTASE"/>
    <property type="match status" value="1"/>
</dbReference>
<dbReference type="Pfam" id="PF00745">
    <property type="entry name" value="GlutR_dimer"/>
    <property type="match status" value="1"/>
</dbReference>
<dbReference type="Pfam" id="PF05201">
    <property type="entry name" value="GlutR_N"/>
    <property type="match status" value="1"/>
</dbReference>
<dbReference type="Pfam" id="PF01488">
    <property type="entry name" value="Shikimate_DH"/>
    <property type="match status" value="1"/>
</dbReference>
<dbReference type="PIRSF" id="PIRSF000445">
    <property type="entry name" value="4pyrrol_synth_GluRdtase"/>
    <property type="match status" value="1"/>
</dbReference>
<dbReference type="SUPFAM" id="SSF69742">
    <property type="entry name" value="Glutamyl tRNA-reductase catalytic, N-terminal domain"/>
    <property type="match status" value="1"/>
</dbReference>
<dbReference type="SUPFAM" id="SSF69075">
    <property type="entry name" value="Glutamyl tRNA-reductase dimerization domain"/>
    <property type="match status" value="1"/>
</dbReference>
<dbReference type="SUPFAM" id="SSF51735">
    <property type="entry name" value="NAD(P)-binding Rossmann-fold domains"/>
    <property type="match status" value="1"/>
</dbReference>
<dbReference type="PROSITE" id="PS00747">
    <property type="entry name" value="GLUTR"/>
    <property type="match status" value="1"/>
</dbReference>
<accession>B2SQN6</accession>
<comment type="function">
    <text evidence="1">Catalyzes the NADPH-dependent reduction of glutamyl-tRNA(Glu) to glutamate 1-semialdehyde (GSA).</text>
</comment>
<comment type="catalytic activity">
    <reaction evidence="1">
        <text>(S)-4-amino-5-oxopentanoate + tRNA(Glu) + NADP(+) = L-glutamyl-tRNA(Glu) + NADPH + H(+)</text>
        <dbReference type="Rhea" id="RHEA:12344"/>
        <dbReference type="Rhea" id="RHEA-COMP:9663"/>
        <dbReference type="Rhea" id="RHEA-COMP:9680"/>
        <dbReference type="ChEBI" id="CHEBI:15378"/>
        <dbReference type="ChEBI" id="CHEBI:57501"/>
        <dbReference type="ChEBI" id="CHEBI:57783"/>
        <dbReference type="ChEBI" id="CHEBI:58349"/>
        <dbReference type="ChEBI" id="CHEBI:78442"/>
        <dbReference type="ChEBI" id="CHEBI:78520"/>
        <dbReference type="EC" id="1.2.1.70"/>
    </reaction>
</comment>
<comment type="pathway">
    <text evidence="1">Porphyrin-containing compound metabolism; protoporphyrin-IX biosynthesis; 5-aminolevulinate from L-glutamyl-tRNA(Glu): step 1/2.</text>
</comment>
<comment type="subunit">
    <text evidence="1">Homodimer.</text>
</comment>
<comment type="domain">
    <text evidence="1">Possesses an unusual extended V-shaped dimeric structure with each monomer consisting of three distinct domains arranged along a curved 'spinal' alpha-helix. The N-terminal catalytic domain specifically recognizes the glutamate moiety of the substrate. The second domain is the NADPH-binding domain, and the third C-terminal domain is responsible for dimerization.</text>
</comment>
<comment type="miscellaneous">
    <text evidence="1">During catalysis, the active site Cys acts as a nucleophile attacking the alpha-carbonyl group of tRNA-bound glutamate with the formation of a thioester intermediate between enzyme and glutamate, and the concomitant release of tRNA(Glu). The thioester intermediate is finally reduced by direct hydride transfer from NADPH, to form the product GSA.</text>
</comment>
<comment type="similarity">
    <text evidence="1">Belongs to the glutamyl-tRNA reductase family.</text>
</comment>
<proteinExistence type="inferred from homology"/>
<sequence>MTLWVLGLNHQTAPVDLRERAAFAGDALPRALESLRALPQVSEAALLSTCNRTELYAMADEARSLVNWLETHAPGLSGYLYQHQEAEAVRHLFRVATGLDSMVLGEPQILGQVKDAWAVARAHGALGSGLDRLFQQTFSVAKRARTDTRVGANPVSVASTAVRLAQESFARLNESTVLLIGAGETIELAAKHLSEGRVRRLLIANRTLAHAQTLASQHGGYALPLTDLERHLAEADVVFSATAAREPLVTRVQVEQALRARKRKPMLLFDLAVPRDIEASVDELSDAYLYTVDDLERAVEDNRRGRREAADQAEAIIDLQVARYVETLQATTRQAPLKRLRAFGDSTRDELLAKARQQLHNGKPTDEVLEQLAHALTNRLLHPPTAALRDAALNNDLELTTAADRLFPEKPGYQHPPIATPIVRTDDADPAP</sequence>
<name>HEM1_XANOP</name>
<protein>
    <recommendedName>
        <fullName evidence="1">Glutamyl-tRNA reductase</fullName>
        <shortName evidence="1">GluTR</shortName>
        <ecNumber evidence="1">1.2.1.70</ecNumber>
    </recommendedName>
</protein>
<gene>
    <name evidence="1" type="primary">hemA</name>
    <name type="ordered locus">PXO_04547</name>
</gene>
<reference key="1">
    <citation type="journal article" date="2008" name="BMC Genomics">
        <title>Genome sequence and rapid evolution of the rice pathogen Xanthomonas oryzae pv. oryzae PXO99A.</title>
        <authorList>
            <person name="Salzberg S.L."/>
            <person name="Sommer D.D."/>
            <person name="Schatz M.C."/>
            <person name="Phillippy A.M."/>
            <person name="Rabinowicz P.D."/>
            <person name="Tsuge S."/>
            <person name="Furutani A."/>
            <person name="Ochiai H."/>
            <person name="Delcher A.L."/>
            <person name="Kelley D."/>
            <person name="Madupu R."/>
            <person name="Puiu D."/>
            <person name="Radune D."/>
            <person name="Shumway M."/>
            <person name="Trapnell C."/>
            <person name="Aparna G."/>
            <person name="Jha G."/>
            <person name="Pandey A."/>
            <person name="Patil P.B."/>
            <person name="Ishihara H."/>
            <person name="Meyer D.F."/>
            <person name="Szurek B."/>
            <person name="Verdier V."/>
            <person name="Koebnik R."/>
            <person name="Dow J.M."/>
            <person name="Ryan R.P."/>
            <person name="Hirata H."/>
            <person name="Tsuyumu S."/>
            <person name="Won Lee S."/>
            <person name="Seo Y.-S."/>
            <person name="Sriariyanum M."/>
            <person name="Ronald P.C."/>
            <person name="Sonti R.V."/>
            <person name="Van Sluys M.-A."/>
            <person name="Leach J.E."/>
            <person name="White F.F."/>
            <person name="Bogdanove A.J."/>
        </authorList>
    </citation>
    <scope>NUCLEOTIDE SEQUENCE [LARGE SCALE GENOMIC DNA]</scope>
    <source>
        <strain>PXO99A</strain>
    </source>
</reference>